<name>INTU_DROME</name>
<gene>
    <name type="primary">in</name>
    <name type="ORF">CG16993</name>
</gene>
<organism>
    <name type="scientific">Drosophila melanogaster</name>
    <name type="common">Fruit fly</name>
    <dbReference type="NCBI Taxonomy" id="7227"/>
    <lineage>
        <taxon>Eukaryota</taxon>
        <taxon>Metazoa</taxon>
        <taxon>Ecdysozoa</taxon>
        <taxon>Arthropoda</taxon>
        <taxon>Hexapoda</taxon>
        <taxon>Insecta</taxon>
        <taxon>Pterygota</taxon>
        <taxon>Neoptera</taxon>
        <taxon>Endopterygota</taxon>
        <taxon>Diptera</taxon>
        <taxon>Brachycera</taxon>
        <taxon>Muscomorpha</taxon>
        <taxon>Ephydroidea</taxon>
        <taxon>Drosophilidae</taxon>
        <taxon>Drosophila</taxon>
        <taxon>Sophophora</taxon>
    </lineage>
</organism>
<comment type="function">
    <text evidence="3 4 5 6">Plays a role in the definition of cell polarity via the planar cell polarity (PCP) cascade. Acts downstream of fuz and accumulates asymmetrically in wing cells to regulate planar polarity in the wing. Probably acts by regulating ciliogenesis.</text>
</comment>
<comment type="subunit">
    <text evidence="5">Interacts with mwh.</text>
</comment>
<comment type="interaction">
    <interactant intactId="EBI-2890486">
        <id>Q9VPH0</id>
    </interactant>
    <interactant intactId="EBI-164303">
        <id>Q9VQ36</id>
        <label>frtz</label>
    </interactant>
    <organismsDiffer>false</organismsDiffer>
    <experiments>4</experiments>
</comment>
<comment type="interaction">
    <interactant intactId="EBI-2890486">
        <id>Q9VPH0</id>
    </interactant>
    <interactant intactId="EBI-40202319">
        <id>O16868</id>
        <label>fuz</label>
    </interactant>
    <organismsDiffer>false</organismsDiffer>
    <experiments>6</experiments>
</comment>
<comment type="subcellular location">
    <subcellularLocation>
        <location evidence="2">Cytoplasm</location>
    </subcellularLocation>
    <subcellularLocation>
        <location evidence="2">Cell membrane</location>
    </subcellularLocation>
    <text>Localizes in the vicinity of plasma membrane and the cortical actin cytoskeleton of wing disk and pupal wing cells (PubMed:10570461). Localizes to the proximal side of wing cells, fuz and frtz are required for its localization (PubMed:15556868).</text>
</comment>
<comment type="disruption phenotype">
    <text evidence="6">Abnormal wing hair polarity and in many wing cells forming two or more hairs instead of the normal single hair.</text>
</comment>
<comment type="similarity">
    <text evidence="7">Belongs to the inturned family.</text>
</comment>
<accession>Q9VPH0</accession>
<accession>Q24144</accession>
<evidence type="ECO:0000256" key="1">
    <source>
        <dbReference type="SAM" id="MobiDB-lite"/>
    </source>
</evidence>
<evidence type="ECO:0000269" key="2">
    <source>
    </source>
</evidence>
<evidence type="ECO:0000269" key="3">
    <source>
    </source>
</evidence>
<evidence type="ECO:0000269" key="4">
    <source>
    </source>
</evidence>
<evidence type="ECO:0000269" key="5">
    <source>
    </source>
</evidence>
<evidence type="ECO:0000269" key="6">
    <source>
    </source>
</evidence>
<evidence type="ECO:0000305" key="7"/>
<reference key="1">
    <citation type="journal article" date="1996" name="Development">
        <title>The Drosophila tissue polarity gene inturned acts cell autonomously and encodes a novel protein.</title>
        <authorList>
            <person name="Park W.J."/>
            <person name="Liu J."/>
            <person name="Sharp E.J."/>
            <person name="Adler P.N."/>
        </authorList>
    </citation>
    <scope>NUCLEOTIDE SEQUENCE [MRNA]</scope>
    <scope>DISRUPTION PHENOTYPE</scope>
    <scope>FUNCTION</scope>
</reference>
<reference key="2">
    <citation type="journal article" date="2000" name="Science">
        <title>The genome sequence of Drosophila melanogaster.</title>
        <authorList>
            <person name="Adams M.D."/>
            <person name="Celniker S.E."/>
            <person name="Holt R.A."/>
            <person name="Evans C.A."/>
            <person name="Gocayne J.D."/>
            <person name="Amanatides P.G."/>
            <person name="Scherer S.E."/>
            <person name="Li P.W."/>
            <person name="Hoskins R.A."/>
            <person name="Galle R.F."/>
            <person name="George R.A."/>
            <person name="Lewis S.E."/>
            <person name="Richards S."/>
            <person name="Ashburner M."/>
            <person name="Henderson S.N."/>
            <person name="Sutton G.G."/>
            <person name="Wortman J.R."/>
            <person name="Yandell M.D."/>
            <person name="Zhang Q."/>
            <person name="Chen L.X."/>
            <person name="Brandon R.C."/>
            <person name="Rogers Y.-H.C."/>
            <person name="Blazej R.G."/>
            <person name="Champe M."/>
            <person name="Pfeiffer B.D."/>
            <person name="Wan K.H."/>
            <person name="Doyle C."/>
            <person name="Baxter E.G."/>
            <person name="Helt G."/>
            <person name="Nelson C.R."/>
            <person name="Miklos G.L.G."/>
            <person name="Abril J.F."/>
            <person name="Agbayani A."/>
            <person name="An H.-J."/>
            <person name="Andrews-Pfannkoch C."/>
            <person name="Baldwin D."/>
            <person name="Ballew R.M."/>
            <person name="Basu A."/>
            <person name="Baxendale J."/>
            <person name="Bayraktaroglu L."/>
            <person name="Beasley E.M."/>
            <person name="Beeson K.Y."/>
            <person name="Benos P.V."/>
            <person name="Berman B.P."/>
            <person name="Bhandari D."/>
            <person name="Bolshakov S."/>
            <person name="Borkova D."/>
            <person name="Botchan M.R."/>
            <person name="Bouck J."/>
            <person name="Brokstein P."/>
            <person name="Brottier P."/>
            <person name="Burtis K.C."/>
            <person name="Busam D.A."/>
            <person name="Butler H."/>
            <person name="Cadieu E."/>
            <person name="Center A."/>
            <person name="Chandra I."/>
            <person name="Cherry J.M."/>
            <person name="Cawley S."/>
            <person name="Dahlke C."/>
            <person name="Davenport L.B."/>
            <person name="Davies P."/>
            <person name="de Pablos B."/>
            <person name="Delcher A."/>
            <person name="Deng Z."/>
            <person name="Mays A.D."/>
            <person name="Dew I."/>
            <person name="Dietz S.M."/>
            <person name="Dodson K."/>
            <person name="Doup L.E."/>
            <person name="Downes M."/>
            <person name="Dugan-Rocha S."/>
            <person name="Dunkov B.C."/>
            <person name="Dunn P."/>
            <person name="Durbin K.J."/>
            <person name="Evangelista C.C."/>
            <person name="Ferraz C."/>
            <person name="Ferriera S."/>
            <person name="Fleischmann W."/>
            <person name="Fosler C."/>
            <person name="Gabrielian A.E."/>
            <person name="Garg N.S."/>
            <person name="Gelbart W.M."/>
            <person name="Glasser K."/>
            <person name="Glodek A."/>
            <person name="Gong F."/>
            <person name="Gorrell J.H."/>
            <person name="Gu Z."/>
            <person name="Guan P."/>
            <person name="Harris M."/>
            <person name="Harris N.L."/>
            <person name="Harvey D.A."/>
            <person name="Heiman T.J."/>
            <person name="Hernandez J.R."/>
            <person name="Houck J."/>
            <person name="Hostin D."/>
            <person name="Houston K.A."/>
            <person name="Howland T.J."/>
            <person name="Wei M.-H."/>
            <person name="Ibegwam C."/>
            <person name="Jalali M."/>
            <person name="Kalush F."/>
            <person name="Karpen G.H."/>
            <person name="Ke Z."/>
            <person name="Kennison J.A."/>
            <person name="Ketchum K.A."/>
            <person name="Kimmel B.E."/>
            <person name="Kodira C.D."/>
            <person name="Kraft C.L."/>
            <person name="Kravitz S."/>
            <person name="Kulp D."/>
            <person name="Lai Z."/>
            <person name="Lasko P."/>
            <person name="Lei Y."/>
            <person name="Levitsky A.A."/>
            <person name="Li J.H."/>
            <person name="Li Z."/>
            <person name="Liang Y."/>
            <person name="Lin X."/>
            <person name="Liu X."/>
            <person name="Mattei B."/>
            <person name="McIntosh T.C."/>
            <person name="McLeod M.P."/>
            <person name="McPherson D."/>
            <person name="Merkulov G."/>
            <person name="Milshina N.V."/>
            <person name="Mobarry C."/>
            <person name="Morris J."/>
            <person name="Moshrefi A."/>
            <person name="Mount S.M."/>
            <person name="Moy M."/>
            <person name="Murphy B."/>
            <person name="Murphy L."/>
            <person name="Muzny D.M."/>
            <person name="Nelson D.L."/>
            <person name="Nelson D.R."/>
            <person name="Nelson K.A."/>
            <person name="Nixon K."/>
            <person name="Nusskern D.R."/>
            <person name="Pacleb J.M."/>
            <person name="Palazzolo M."/>
            <person name="Pittman G.S."/>
            <person name="Pan S."/>
            <person name="Pollard J."/>
            <person name="Puri V."/>
            <person name="Reese M.G."/>
            <person name="Reinert K."/>
            <person name="Remington K."/>
            <person name="Saunders R.D.C."/>
            <person name="Scheeler F."/>
            <person name="Shen H."/>
            <person name="Shue B.C."/>
            <person name="Siden-Kiamos I."/>
            <person name="Simpson M."/>
            <person name="Skupski M.P."/>
            <person name="Smith T.J."/>
            <person name="Spier E."/>
            <person name="Spradling A.C."/>
            <person name="Stapleton M."/>
            <person name="Strong R."/>
            <person name="Sun E."/>
            <person name="Svirskas R."/>
            <person name="Tector C."/>
            <person name="Turner R."/>
            <person name="Venter E."/>
            <person name="Wang A.H."/>
            <person name="Wang X."/>
            <person name="Wang Z.-Y."/>
            <person name="Wassarman D.A."/>
            <person name="Weinstock G.M."/>
            <person name="Weissenbach J."/>
            <person name="Williams S.M."/>
            <person name="Woodage T."/>
            <person name="Worley K.C."/>
            <person name="Wu D."/>
            <person name="Yang S."/>
            <person name="Yao Q.A."/>
            <person name="Ye J."/>
            <person name="Yeh R.-F."/>
            <person name="Zaveri J.S."/>
            <person name="Zhan M."/>
            <person name="Zhang G."/>
            <person name="Zhao Q."/>
            <person name="Zheng L."/>
            <person name="Zheng X.H."/>
            <person name="Zhong F.N."/>
            <person name="Zhong W."/>
            <person name="Zhou X."/>
            <person name="Zhu S.C."/>
            <person name="Zhu X."/>
            <person name="Smith H.O."/>
            <person name="Gibbs R.A."/>
            <person name="Myers E.W."/>
            <person name="Rubin G.M."/>
            <person name="Venter J.C."/>
        </authorList>
    </citation>
    <scope>NUCLEOTIDE SEQUENCE [LARGE SCALE GENOMIC DNA]</scope>
    <source>
        <strain>Berkeley</strain>
    </source>
</reference>
<reference key="3">
    <citation type="journal article" date="2002" name="Genome Biol.">
        <title>Annotation of the Drosophila melanogaster euchromatic genome: a systematic review.</title>
        <authorList>
            <person name="Misra S."/>
            <person name="Crosby M.A."/>
            <person name="Mungall C.J."/>
            <person name="Matthews B.B."/>
            <person name="Campbell K.S."/>
            <person name="Hradecky P."/>
            <person name="Huang Y."/>
            <person name="Kaminker J.S."/>
            <person name="Millburn G.H."/>
            <person name="Prochnik S.E."/>
            <person name="Smith C.D."/>
            <person name="Tupy J.L."/>
            <person name="Whitfield E.J."/>
            <person name="Bayraktaroglu L."/>
            <person name="Berman B.P."/>
            <person name="Bettencourt B.R."/>
            <person name="Celniker S.E."/>
            <person name="de Grey A.D.N.J."/>
            <person name="Drysdale R.A."/>
            <person name="Harris N.L."/>
            <person name="Richter J."/>
            <person name="Russo S."/>
            <person name="Schroeder A.J."/>
            <person name="Shu S.Q."/>
            <person name="Stapleton M."/>
            <person name="Yamada C."/>
            <person name="Ashburner M."/>
            <person name="Gelbart W.M."/>
            <person name="Rubin G.M."/>
            <person name="Lewis S.E."/>
        </authorList>
    </citation>
    <scope>GENOME REANNOTATION</scope>
    <source>
        <strain>Berkeley</strain>
    </source>
</reference>
<reference key="4">
    <citation type="journal article" date="2002" name="Genome Biol.">
        <title>A Drosophila full-length cDNA resource.</title>
        <authorList>
            <person name="Stapleton M."/>
            <person name="Carlson J.W."/>
            <person name="Brokstein P."/>
            <person name="Yu C."/>
            <person name="Champe M."/>
            <person name="George R.A."/>
            <person name="Guarin H."/>
            <person name="Kronmiller B."/>
            <person name="Pacleb J.M."/>
            <person name="Park S."/>
            <person name="Wan K.H."/>
            <person name="Rubin G.M."/>
            <person name="Celniker S.E."/>
        </authorList>
    </citation>
    <scope>NUCLEOTIDE SEQUENCE [LARGE SCALE MRNA]</scope>
    <source>
        <strain>Berkeley</strain>
        <tissue>Embryo</tissue>
    </source>
</reference>
<reference key="5">
    <citation type="journal article" date="1999" name="Dev. Genet.">
        <title>The inturned protein of Drosophila melanogaster is a cytoplasmic protein located at the cell periphery in wing cells.</title>
        <authorList>
            <person name="Yun U.J."/>
            <person name="Kim S.Y."/>
            <person name="Liu J."/>
            <person name="Adler P.N."/>
            <person name="Bae E."/>
            <person name="Kim J."/>
            <person name="Park W.J."/>
        </authorList>
    </citation>
    <scope>SUBCELLULAR LOCATION</scope>
</reference>
<reference key="6">
    <citation type="journal article" date="2004" name="Curr. Biol.">
        <title>Inturned localizes to the proximal side of wing cells under the instruction of upstream planar polarity proteins.</title>
        <authorList>
            <person name="Adler P.N."/>
            <person name="Zhu C."/>
            <person name="Stone D."/>
        </authorList>
    </citation>
    <scope>SUBCELLULAR LOCATION</scope>
</reference>
<reference key="7">
    <citation type="journal article" date="2002" name="Genetics">
        <title>The function of the frizzled pathway in the Drosophila wing is dependent on inturned and fuzzy.</title>
        <authorList>
            <person name="Lee H."/>
            <person name="Adler P.N."/>
        </authorList>
    </citation>
    <scope>FUNCTION</scope>
</reference>
<reference key="8">
    <citation type="journal article" date="2008" name="Development">
        <title>Planar polarity genes in the Drosophila wing regulate the localisation of the FH3-domain protein Multiple Wing Hairs to control the site of hair production.</title>
        <authorList>
            <person name="Strutt D."/>
            <person name="Warrington S.J."/>
        </authorList>
    </citation>
    <scope>FUNCTION</scope>
</reference>
<reference key="9">
    <citation type="journal article" date="2010" name="Genetics">
        <title>The Drosophila planar polarity proteins inturned and multiple wing hairs interact physically and function together.</title>
        <authorList>
            <person name="Lu Q."/>
            <person name="Yan J."/>
            <person name="Adler P.N."/>
        </authorList>
    </citation>
    <scope>FUNCTION</scope>
    <scope>INTERACTION WITH MWH</scope>
</reference>
<feature type="chain" id="PRO_0000416287" description="Protein inturned">
    <location>
        <begin position="1"/>
        <end position="869"/>
    </location>
</feature>
<feature type="region of interest" description="Disordered" evidence="1">
    <location>
        <begin position="1"/>
        <end position="28"/>
    </location>
</feature>
<feature type="region of interest" description="Disordered" evidence="1">
    <location>
        <begin position="70"/>
        <end position="106"/>
    </location>
</feature>
<feature type="compositionally biased region" description="Basic residues" evidence="1">
    <location>
        <begin position="70"/>
        <end position="80"/>
    </location>
</feature>
<feature type="compositionally biased region" description="Low complexity" evidence="1">
    <location>
        <begin position="81"/>
        <end position="97"/>
    </location>
</feature>
<feature type="sequence conflict" description="In Ref. 1; AAC47004." evidence="7" ref="1">
    <original>V</original>
    <variation>L</variation>
    <location>
        <position position="170"/>
    </location>
</feature>
<feature type="sequence conflict" description="In Ref. 1; AAC47004." evidence="7" ref="1">
    <original>K</original>
    <variation>Q</variation>
    <location>
        <position position="201"/>
    </location>
</feature>
<feature type="sequence conflict" description="In Ref. 1; AAC47004." evidence="7" ref="1">
    <original>R</original>
    <variation>Q</variation>
    <location>
        <position position="231"/>
    </location>
</feature>
<feature type="sequence conflict" description="In Ref. 1; AAC47004." evidence="7" ref="1">
    <original>R</original>
    <variation>G</variation>
    <location>
        <position position="390"/>
    </location>
</feature>
<feature type="sequence conflict" description="In Ref. 1; AAC47004." evidence="7" ref="1">
    <original>QLR</original>
    <variation>HVP</variation>
    <location>
        <begin position="440"/>
        <end position="442"/>
    </location>
</feature>
<feature type="sequence conflict" description="In Ref. 1; AAC47004." evidence="7" ref="1">
    <original>V</original>
    <variation>I</variation>
    <location>
        <position position="803"/>
    </location>
</feature>
<sequence>MRKSPASLPSEAFSSSNSSLSNSYSDGSDLANWEEYVSTDGSLFYMEYVRCEKTGVSAERRVEFMRRSLRLGKKSSRRQPHSNNQNQSQNQNQSHGPSRLDSQTEPQEFRFSQFKTAAPDPKKLDLVITAADRFRFGRRSTAVESILGFRVLPFPDQPECLMVDGFVHDVSALQHGIKRGDWFRSLNGIEVYASNVDELLKQFVEPTQVCLGFQSCGAASAVSPTDPGYNRNVREEQVCKVENFPMFTEKFEQMLITEGNFGIPGSSVDIRMPFAMLLLPPECYQHEQQQDSLYYFPEIPDNFLFKARGSFLTLHAVLSELHTQPLSSRLLVDQVQYHVNYRQLNGFLVLFAYAGGLCCAAECSLRSDELIGYIRFSLPGLVLESFNQEREPGNSSRLKLFLRHFCEIQRTRLVARCHGHIRFEELLGQSRSLPLPKEAQLRIFDALSEMEAMDYRNWNDEPLTTHREFFIYGSALYYDGFLVASLLPPEVRVSVEGFLRCRGIFELLGAAPGIKVREMYVWEEIVLPSATGRYFLTICTKNHLSLAVILKIFDAPDMAPDAVVGPSLFYIEEIQETLDHLVQCGIESLAMFWSVSNKRPEVLDATASESRDQEKEPNNRLESFLKQKLTVLSPSVEEEAQLCSSLGGSSIHSLTPSEDESCRRRLTPIHGTAEDSDSGSDWENFAVQHPLHYGLNLGAESHSQSQMTESMWKEINNVVPVKISAGWKNSVLHYVYIDIANGSLFAPFTDSSENSNYLSEIRQACHIIHAVLQKSKHYRRHLSESSRAQTNSNGHSSHTVSLVKEHGMILEVSTQPKSDGQSQSSTSSRFVVVGRLFQSPAKEVYVCHRSDVPQNIVEMAFRLSFFSMG</sequence>
<protein>
    <recommendedName>
        <fullName>Protein inturned</fullName>
    </recommendedName>
</protein>
<dbReference type="EMBL" id="U37134">
    <property type="protein sequence ID" value="AAC47004.1"/>
    <property type="molecule type" value="mRNA"/>
</dbReference>
<dbReference type="EMBL" id="AE014296">
    <property type="protein sequence ID" value="AAF51582.2"/>
    <property type="molecule type" value="Genomic_DNA"/>
</dbReference>
<dbReference type="EMBL" id="AY089567">
    <property type="protein sequence ID" value="AAL90305.1"/>
    <property type="molecule type" value="mRNA"/>
</dbReference>
<dbReference type="RefSeq" id="NP_788548.1">
    <property type="nucleotide sequence ID" value="NM_176370.3"/>
</dbReference>
<dbReference type="BioGRID" id="65506">
    <property type="interactions" value="12"/>
</dbReference>
<dbReference type="FunCoup" id="Q9VPH0">
    <property type="interactions" value="64"/>
</dbReference>
<dbReference type="IntAct" id="Q9VPH0">
    <property type="interactions" value="5"/>
</dbReference>
<dbReference type="STRING" id="7227.FBpp0077841"/>
<dbReference type="GlyGen" id="Q9VPH0">
    <property type="glycosylation" value="1 site"/>
</dbReference>
<dbReference type="PaxDb" id="7227-FBpp0077841"/>
<dbReference type="EnsemblMetazoa" id="FBtr0078183">
    <property type="protein sequence ID" value="FBpp0077841"/>
    <property type="gene ID" value="FBgn0001259"/>
</dbReference>
<dbReference type="GeneID" id="40246"/>
<dbReference type="KEGG" id="dme:Dmel_CG16993"/>
<dbReference type="UCSC" id="CG16993-RA">
    <property type="organism name" value="d. melanogaster"/>
</dbReference>
<dbReference type="AGR" id="FB:FBgn0001259"/>
<dbReference type="CTD" id="40246"/>
<dbReference type="FlyBase" id="FBgn0001259">
    <property type="gene designation" value="in"/>
</dbReference>
<dbReference type="VEuPathDB" id="VectorBase:FBgn0001259"/>
<dbReference type="eggNOG" id="ENOG502QQJQ">
    <property type="taxonomic scope" value="Eukaryota"/>
</dbReference>
<dbReference type="GeneTree" id="ENSGT00390000001301"/>
<dbReference type="HOGENOM" id="CLU_014223_0_0_1"/>
<dbReference type="InParanoid" id="Q9VPH0"/>
<dbReference type="OMA" id="YVCHRSD"/>
<dbReference type="OrthoDB" id="10263272at2759"/>
<dbReference type="PhylomeDB" id="Q9VPH0"/>
<dbReference type="Reactome" id="R-DME-450728">
    <property type="pathway name" value="Inhibition of actin polymerization"/>
</dbReference>
<dbReference type="Reactome" id="R-DME-5610787">
    <property type="pathway name" value="Hedgehog 'off' state"/>
</dbReference>
<dbReference type="BioGRID-ORCS" id="40246">
    <property type="hits" value="0 hits in 1 CRISPR screen"/>
</dbReference>
<dbReference type="ChiTaRS" id="if">
    <property type="organism name" value="fly"/>
</dbReference>
<dbReference type="GenomeRNAi" id="40246"/>
<dbReference type="PRO" id="PR:Q9VPH0"/>
<dbReference type="Proteomes" id="UP000000803">
    <property type="component" value="Chromosome 3L"/>
</dbReference>
<dbReference type="Bgee" id="FBgn0001259">
    <property type="expression patterns" value="Expressed in capitellum (Drosophila) and 27 other cell types or tissues"/>
</dbReference>
<dbReference type="GO" id="GO:0005929">
    <property type="term" value="C:cilium"/>
    <property type="evidence" value="ECO:0000318"/>
    <property type="project" value="GO_Central"/>
</dbReference>
<dbReference type="GO" id="GO:0005737">
    <property type="term" value="C:cytoplasm"/>
    <property type="evidence" value="ECO:0000318"/>
    <property type="project" value="GO_Central"/>
</dbReference>
<dbReference type="GO" id="GO:0005886">
    <property type="term" value="C:plasma membrane"/>
    <property type="evidence" value="ECO:0000250"/>
    <property type="project" value="FlyBase"/>
</dbReference>
<dbReference type="GO" id="GO:0060271">
    <property type="term" value="P:cilium assembly"/>
    <property type="evidence" value="ECO:0000318"/>
    <property type="project" value="GO_Central"/>
</dbReference>
<dbReference type="GO" id="GO:0001737">
    <property type="term" value="P:establishment of imaginal disc-derived wing hair orientation"/>
    <property type="evidence" value="ECO:0000304"/>
    <property type="project" value="FlyBase"/>
</dbReference>
<dbReference type="GO" id="GO:0007399">
    <property type="term" value="P:nervous system development"/>
    <property type="evidence" value="ECO:0000318"/>
    <property type="project" value="GO_Central"/>
</dbReference>
<dbReference type="GO" id="GO:0035316">
    <property type="term" value="P:non-sensory hair organization"/>
    <property type="evidence" value="ECO:0000315"/>
    <property type="project" value="FlyBase"/>
</dbReference>
<dbReference type="GO" id="GO:0016192">
    <property type="term" value="P:vesicle-mediated transport"/>
    <property type="evidence" value="ECO:0007669"/>
    <property type="project" value="InterPro"/>
</dbReference>
<dbReference type="InterPro" id="IPR043987">
    <property type="entry name" value="CCZ1/INTU/HSP4_longin_1"/>
</dbReference>
<dbReference type="InterPro" id="IPR043989">
    <property type="entry name" value="CCZ1/INTU/HSP4_longin_3"/>
</dbReference>
<dbReference type="InterPro" id="IPR043988">
    <property type="entry name" value="CCZ1/INTU_longin_2"/>
</dbReference>
<dbReference type="InterPro" id="IPR039151">
    <property type="entry name" value="INTU"/>
</dbReference>
<dbReference type="InterPro" id="IPR036034">
    <property type="entry name" value="PDZ_sf"/>
</dbReference>
<dbReference type="PANTHER" id="PTHR21082">
    <property type="entry name" value="PROTEIN INTURNED"/>
    <property type="match status" value="1"/>
</dbReference>
<dbReference type="PANTHER" id="PTHR21082:SF4">
    <property type="entry name" value="PROTEIN INTURNED"/>
    <property type="match status" value="1"/>
</dbReference>
<dbReference type="Pfam" id="PF19031">
    <property type="entry name" value="Intu_longin_1"/>
    <property type="match status" value="1"/>
</dbReference>
<dbReference type="Pfam" id="PF19032">
    <property type="entry name" value="Intu_longin_2"/>
    <property type="match status" value="1"/>
</dbReference>
<dbReference type="Pfam" id="PF19033">
    <property type="entry name" value="Intu_longin_3"/>
    <property type="match status" value="1"/>
</dbReference>
<dbReference type="SUPFAM" id="SSF50156">
    <property type="entry name" value="PDZ domain-like"/>
    <property type="match status" value="1"/>
</dbReference>
<proteinExistence type="evidence at protein level"/>
<keyword id="KW-1003">Cell membrane</keyword>
<keyword id="KW-0970">Cilium biogenesis/degradation</keyword>
<keyword id="KW-0963">Cytoplasm</keyword>
<keyword id="KW-0217">Developmental protein</keyword>
<keyword id="KW-0472">Membrane</keyword>
<keyword id="KW-1185">Reference proteome</keyword>